<dbReference type="EC" id="2.7.4.3" evidence="1"/>
<dbReference type="EMBL" id="U57713">
    <property type="protein sequence ID" value="AAB49184.1"/>
    <property type="molecule type" value="Genomic_DNA"/>
</dbReference>
<dbReference type="SMR" id="Q59591"/>
<dbReference type="UniPathway" id="UPA00588">
    <property type="reaction ID" value="UER00649"/>
</dbReference>
<dbReference type="GO" id="GO:0005737">
    <property type="term" value="C:cytoplasm"/>
    <property type="evidence" value="ECO:0007669"/>
    <property type="project" value="UniProtKB-SubCell"/>
</dbReference>
<dbReference type="GO" id="GO:0004017">
    <property type="term" value="F:adenylate kinase activity"/>
    <property type="evidence" value="ECO:0007669"/>
    <property type="project" value="UniProtKB-EC"/>
</dbReference>
<dbReference type="GO" id="GO:0005524">
    <property type="term" value="F:ATP binding"/>
    <property type="evidence" value="ECO:0007669"/>
    <property type="project" value="UniProtKB-KW"/>
</dbReference>
<dbReference type="GO" id="GO:0044209">
    <property type="term" value="P:AMP salvage"/>
    <property type="evidence" value="ECO:0007669"/>
    <property type="project" value="UniProtKB-UniPathway"/>
</dbReference>
<dbReference type="CDD" id="cd01428">
    <property type="entry name" value="ADK"/>
    <property type="match status" value="1"/>
</dbReference>
<dbReference type="FunFam" id="3.40.50.300:FF:000106">
    <property type="entry name" value="Adenylate kinase mitochondrial"/>
    <property type="match status" value="1"/>
</dbReference>
<dbReference type="Gene3D" id="3.40.50.300">
    <property type="entry name" value="P-loop containing nucleotide triphosphate hydrolases"/>
    <property type="match status" value="1"/>
</dbReference>
<dbReference type="HAMAP" id="MF_00235">
    <property type="entry name" value="Adenylate_kinase_Adk"/>
    <property type="match status" value="1"/>
</dbReference>
<dbReference type="InterPro" id="IPR006259">
    <property type="entry name" value="Adenyl_kin_sub"/>
</dbReference>
<dbReference type="InterPro" id="IPR000850">
    <property type="entry name" value="Adenylat/UMP-CMP_kin"/>
</dbReference>
<dbReference type="InterPro" id="IPR033690">
    <property type="entry name" value="Adenylat_kinase_CS"/>
</dbReference>
<dbReference type="InterPro" id="IPR007862">
    <property type="entry name" value="Adenylate_kinase_lid-dom"/>
</dbReference>
<dbReference type="InterPro" id="IPR027417">
    <property type="entry name" value="P-loop_NTPase"/>
</dbReference>
<dbReference type="NCBIfam" id="TIGR01351">
    <property type="entry name" value="adk"/>
    <property type="match status" value="1"/>
</dbReference>
<dbReference type="NCBIfam" id="NF001379">
    <property type="entry name" value="PRK00279.1-1"/>
    <property type="match status" value="1"/>
</dbReference>
<dbReference type="PANTHER" id="PTHR23359">
    <property type="entry name" value="NUCLEOTIDE KINASE"/>
    <property type="match status" value="1"/>
</dbReference>
<dbReference type="Pfam" id="PF00406">
    <property type="entry name" value="ADK"/>
    <property type="match status" value="1"/>
</dbReference>
<dbReference type="Pfam" id="PF05191">
    <property type="entry name" value="ADK_lid"/>
    <property type="match status" value="1"/>
</dbReference>
<dbReference type="PRINTS" id="PR00094">
    <property type="entry name" value="ADENYLTKNASE"/>
</dbReference>
<dbReference type="SUPFAM" id="SSF52540">
    <property type="entry name" value="P-loop containing nucleoside triphosphate hydrolases"/>
    <property type="match status" value="1"/>
</dbReference>
<dbReference type="PROSITE" id="PS00113">
    <property type="entry name" value="ADENYLATE_KINASE"/>
    <property type="match status" value="1"/>
</dbReference>
<reference key="1">
    <citation type="journal article" date="1996" name="J. Mol. Evol.">
        <title>A comparison of the nucleotide sequences of the adk and recA genes of pathogenic and commensal Neisseria species: evidence for extensive interspecies recombination within adk.</title>
        <authorList>
            <person name="Feil E."/>
            <person name="Zhou J."/>
            <person name="Maynard Smith J."/>
            <person name="Spratt B.G."/>
        </authorList>
    </citation>
    <scope>NUCLEOTIDE SEQUENCE [GENOMIC DNA]</scope>
    <source>
        <strain>ATCC 49930 / CIP 72.15 / NCTC 10212 / NA10</strain>
    </source>
</reference>
<evidence type="ECO:0000255" key="1">
    <source>
        <dbReference type="HAMAP-Rule" id="MF_00235"/>
    </source>
</evidence>
<protein>
    <recommendedName>
        <fullName evidence="1">Adenylate kinase</fullName>
        <shortName evidence="1">AK</shortName>
        <ecNumber evidence="1">2.7.4.3</ecNumber>
    </recommendedName>
    <alternativeName>
        <fullName evidence="1">ATP-AMP transphosphorylase</fullName>
    </alternativeName>
    <alternativeName>
        <fullName evidence="1">ATP:AMP phosphotransferase</fullName>
    </alternativeName>
    <alternativeName>
        <fullName evidence="1">Adenylate monophosphate kinase</fullName>
    </alternativeName>
</protein>
<accession>Q59591</accession>
<feature type="chain" id="PRO_0000158807" description="Adenylate kinase">
    <location>
        <begin position="1" status="less than"/>
        <end position="174" status="greater than"/>
    </location>
</feature>
<feature type="region of interest" description="NMP" evidence="1">
    <location>
        <begin position="12"/>
        <end position="41"/>
    </location>
</feature>
<feature type="region of interest" description="LID" evidence="1">
    <location>
        <begin position="104"/>
        <end position="141"/>
    </location>
</feature>
<feature type="binding site" evidence="1">
    <location>
        <position position="13"/>
    </location>
    <ligand>
        <name>AMP</name>
        <dbReference type="ChEBI" id="CHEBI:456215"/>
    </ligand>
</feature>
<feature type="binding site" evidence="1">
    <location>
        <position position="18"/>
    </location>
    <ligand>
        <name>AMP</name>
        <dbReference type="ChEBI" id="CHEBI:456215"/>
    </ligand>
</feature>
<feature type="binding site" evidence="1">
    <location>
        <begin position="39"/>
        <end position="41"/>
    </location>
    <ligand>
        <name>AMP</name>
        <dbReference type="ChEBI" id="CHEBI:456215"/>
    </ligand>
</feature>
<feature type="binding site" evidence="1">
    <location>
        <begin position="67"/>
        <end position="70"/>
    </location>
    <ligand>
        <name>AMP</name>
        <dbReference type="ChEBI" id="CHEBI:456215"/>
    </ligand>
</feature>
<feature type="binding site" evidence="1">
    <location>
        <position position="74"/>
    </location>
    <ligand>
        <name>AMP</name>
        <dbReference type="ChEBI" id="CHEBI:456215"/>
    </ligand>
</feature>
<feature type="binding site" evidence="1">
    <location>
        <position position="105"/>
    </location>
    <ligand>
        <name>ATP</name>
        <dbReference type="ChEBI" id="CHEBI:30616"/>
    </ligand>
</feature>
<feature type="binding site" evidence="1">
    <location>
        <begin position="114"/>
        <end position="115"/>
    </location>
    <ligand>
        <name>ATP</name>
        <dbReference type="ChEBI" id="CHEBI:30616"/>
    </ligand>
</feature>
<feature type="binding site" evidence="1">
    <location>
        <position position="138"/>
    </location>
    <ligand>
        <name>AMP</name>
        <dbReference type="ChEBI" id="CHEBI:456215"/>
    </ligand>
</feature>
<feature type="binding site" evidence="1">
    <location>
        <position position="149"/>
    </location>
    <ligand>
        <name>AMP</name>
        <dbReference type="ChEBI" id="CHEBI:456215"/>
    </ligand>
</feature>
<feature type="non-terminal residue">
    <location>
        <position position="1"/>
    </location>
</feature>
<feature type="non-terminal residue">
    <location>
        <position position="174"/>
    </location>
</feature>
<gene>
    <name evidence="1" type="primary">adk</name>
</gene>
<name>KAD_NEIAN</name>
<organism>
    <name type="scientific">Neisseria animalis</name>
    <dbReference type="NCBI Taxonomy" id="492"/>
    <lineage>
        <taxon>Bacteria</taxon>
        <taxon>Pseudomonadati</taxon>
        <taxon>Pseudomonadota</taxon>
        <taxon>Betaproteobacteria</taxon>
        <taxon>Neisseriales</taxon>
        <taxon>Neisseriaceae</taxon>
        <taxon>Neisseria</taxon>
    </lineage>
</organism>
<sequence>FITAAFGIPQISTGDMLRAAIKAGTPLGLEAKKIIDEGGLVRDDIIIGMVKERIAQDDCKNGFLFDGFPRTLAQAEAMVEAGVDLDAVVEIDVPDSVIVDRMSGRRVHLASGRTYHIAYNPPKVEGKDDVTGEDLIQRDDDKEETVKKRLDVYHGQTEVLVGFYSKLTGEHAPK</sequence>
<comment type="function">
    <text evidence="1">Catalyzes the reversible transfer of the terminal phosphate group between ATP and AMP. Plays an important role in cellular energy homeostasis and in adenine nucleotide metabolism.</text>
</comment>
<comment type="catalytic activity">
    <reaction evidence="1">
        <text>AMP + ATP = 2 ADP</text>
        <dbReference type="Rhea" id="RHEA:12973"/>
        <dbReference type="ChEBI" id="CHEBI:30616"/>
        <dbReference type="ChEBI" id="CHEBI:456215"/>
        <dbReference type="ChEBI" id="CHEBI:456216"/>
        <dbReference type="EC" id="2.7.4.3"/>
    </reaction>
</comment>
<comment type="pathway">
    <text evidence="1">Purine metabolism; AMP biosynthesis via salvage pathway; AMP from ADP: step 1/1.</text>
</comment>
<comment type="subunit">
    <text evidence="1">Monomer.</text>
</comment>
<comment type="subcellular location">
    <subcellularLocation>
        <location evidence="1">Cytoplasm</location>
    </subcellularLocation>
</comment>
<comment type="domain">
    <text evidence="1">Consists of three domains, a large central CORE domain and two small peripheral domains, NMPbind and LID, which undergo movements during catalysis. The LID domain closes over the site of phosphoryl transfer upon ATP binding. Assembling and dissambling the active center during each catalytic cycle provides an effective means to prevent ATP hydrolysis.</text>
</comment>
<comment type="similarity">
    <text evidence="1">Belongs to the adenylate kinase family.</text>
</comment>
<keyword id="KW-0067">ATP-binding</keyword>
<keyword id="KW-0963">Cytoplasm</keyword>
<keyword id="KW-0418">Kinase</keyword>
<keyword id="KW-0545">Nucleotide biosynthesis</keyword>
<keyword id="KW-0547">Nucleotide-binding</keyword>
<keyword id="KW-0808">Transferase</keyword>
<proteinExistence type="inferred from homology"/>